<organismHost>
    <name type="scientific">Ornithodoros</name>
    <name type="common">relapsing fever ticks</name>
    <dbReference type="NCBI Taxonomy" id="6937"/>
</organismHost>
<organismHost>
    <name type="scientific">Phacochoerus aethiopicus</name>
    <name type="common">Warthog</name>
    <dbReference type="NCBI Taxonomy" id="85517"/>
</organismHost>
<organismHost>
    <name type="scientific">Phacochoerus africanus</name>
    <name type="common">Warthog</name>
    <dbReference type="NCBI Taxonomy" id="41426"/>
</organismHost>
<organismHost>
    <name type="scientific">Potamochoerus larvatus</name>
    <name type="common">Bushpig</name>
    <dbReference type="NCBI Taxonomy" id="273792"/>
</organismHost>
<organismHost>
    <name type="scientific">Sus scrofa</name>
    <name type="common">Pig</name>
    <dbReference type="NCBI Taxonomy" id="9823"/>
</organismHost>
<feature type="chain" id="PRO_0000373148" description="Putative poly(A) polymerase catalytic subunit">
    <location>
        <begin position="1"/>
        <end position="475"/>
    </location>
</feature>
<proteinExistence type="inferred from homology"/>
<protein>
    <recommendedName>
        <fullName evidence="1">Putative poly(A) polymerase catalytic subunit</fullName>
        <ecNumber>2.7.7.19</ecNumber>
    </recommendedName>
</protein>
<organism>
    <name type="scientific">African swine fever virus (isolate Tick/Malawi/Lil 20-1/1983)</name>
    <name type="common">ASFV</name>
    <dbReference type="NCBI Taxonomy" id="10500"/>
    <lineage>
        <taxon>Viruses</taxon>
        <taxon>Varidnaviria</taxon>
        <taxon>Bamfordvirae</taxon>
        <taxon>Nucleocytoviricota</taxon>
        <taxon>Pokkesviricetes</taxon>
        <taxon>Asfuvirales</taxon>
        <taxon>Asfarviridae</taxon>
        <taxon>Asfivirus</taxon>
        <taxon>African swine fever virus</taxon>
    </lineage>
</organism>
<accession>P0C9D2</accession>
<evidence type="ECO:0000250" key="1">
    <source>
        <dbReference type="UniProtKB" id="Q65159"/>
    </source>
</evidence>
<evidence type="ECO:0000305" key="2"/>
<gene>
    <name type="ordered locus">Mal-075</name>
</gene>
<comment type="function">
    <text evidence="2">Polymerase that creates the 3'-poly(A) tail of mRNA's.</text>
</comment>
<comment type="catalytic activity">
    <reaction>
        <text>RNA(n) + ATP = RNA(n)-3'-adenine ribonucleotide + diphosphate</text>
        <dbReference type="Rhea" id="RHEA:11332"/>
        <dbReference type="Rhea" id="RHEA-COMP:14527"/>
        <dbReference type="Rhea" id="RHEA-COMP:17347"/>
        <dbReference type="ChEBI" id="CHEBI:30616"/>
        <dbReference type="ChEBI" id="CHEBI:33019"/>
        <dbReference type="ChEBI" id="CHEBI:140395"/>
        <dbReference type="ChEBI" id="CHEBI:173115"/>
        <dbReference type="EC" id="2.7.7.19"/>
    </reaction>
</comment>
<comment type="subcellular location">
    <subcellularLocation>
        <location evidence="1">Virion</location>
    </subcellularLocation>
</comment>
<comment type="induction">
    <text evidence="2">Expressed in the late phase of the viral replicative cycle.</text>
</comment>
<comment type="similarity">
    <text evidence="2">Belongs to the poxviridae poly(A) polymerase catalytic subunit family. Highly divergent.</text>
</comment>
<keyword id="KW-0067">ATP-binding</keyword>
<keyword id="KW-0426">Late protein</keyword>
<keyword id="KW-0507">mRNA processing</keyword>
<keyword id="KW-0547">Nucleotide-binding</keyword>
<keyword id="KW-0804">Transcription</keyword>
<keyword id="KW-0808">Transferase</keyword>
<keyword id="KW-0946">Virion</keyword>
<name>PAP1_ASFM2</name>
<reference key="1">
    <citation type="submission" date="2003-03" db="EMBL/GenBank/DDBJ databases">
        <title>African swine fever virus genomes.</title>
        <authorList>
            <person name="Kutish G.F."/>
            <person name="Rock D.L."/>
        </authorList>
    </citation>
    <scope>NUCLEOTIDE SEQUENCE [LARGE SCALE GENOMIC DNA]</scope>
</reference>
<sequence>MSSLPKTDFNVSKYQLIAQKREANAVEIEAALEVVREFIIKKKLILYGGIAIDYALHLKGSSIYPEGERPDFDMFSPNHVEDAYELADILYEKGFKQVGTVRAIHVQTMRVRTDFVWVADLSYMPPNIFDTIPTLTYKNLKIIHPDYQRAGLHLAFCFPFDNPPREDVFSRFKKDLQRYNLIEKYYPIPVVPVKTTYESKTFSVPFKQVAIHGFAAYALLYQTLNELRITCKAPEWKTEFPQPSYSYHKNDKNITLTVDMPRAYPSLVLATYNPEEVIKEMGLHLTEICEPYMDYSPPIFKTKDIHFFSTMFKELAISMIQDNIIVVSPQYLLLYFLYGAFATPADKSLFLFYYNATLWILEKADSLLNMIQKQTSPEEFTRFANTSPFVLTTRVLSCSQERCTFSPAYRISLANDVQQSQLPLPKTHFLSNFLPDISTLPYNYYPGKGKDRPTNFSYEKNLLFNIGGKCIPFAM</sequence>
<dbReference type="EC" id="2.7.7.19"/>
<dbReference type="EMBL" id="AY261361">
    <property type="status" value="NOT_ANNOTATED_CDS"/>
    <property type="molecule type" value="Genomic_DNA"/>
</dbReference>
<dbReference type="SMR" id="P0C9D2"/>
<dbReference type="Proteomes" id="UP000000860">
    <property type="component" value="Segment"/>
</dbReference>
<dbReference type="GO" id="GO:0044423">
    <property type="term" value="C:virion component"/>
    <property type="evidence" value="ECO:0007669"/>
    <property type="project" value="UniProtKB-KW"/>
</dbReference>
<dbReference type="GO" id="GO:0005524">
    <property type="term" value="F:ATP binding"/>
    <property type="evidence" value="ECO:0007669"/>
    <property type="project" value="UniProtKB-KW"/>
</dbReference>
<dbReference type="GO" id="GO:1990817">
    <property type="term" value="F:poly(A) RNA polymerase activity"/>
    <property type="evidence" value="ECO:0007669"/>
    <property type="project" value="UniProtKB-EC"/>
</dbReference>
<dbReference type="GO" id="GO:0006397">
    <property type="term" value="P:mRNA processing"/>
    <property type="evidence" value="ECO:0007669"/>
    <property type="project" value="UniProtKB-KW"/>
</dbReference>
<dbReference type="CDD" id="cd20924">
    <property type="entry name" value="polyA_pol_Asfar"/>
    <property type="match status" value="1"/>
</dbReference>
<dbReference type="InterPro" id="IPR045355">
    <property type="entry name" value="PolyA_pol_cat_su"/>
</dbReference>
<dbReference type="Pfam" id="PF19244">
    <property type="entry name" value="Poly_A_pol_cat"/>
    <property type="match status" value="1"/>
</dbReference>